<organism>
    <name type="scientific">Limosilactobacillus fermentum (strain NBRC 3956 / LMG 18251)</name>
    <name type="common">Lactobacillus fermentum</name>
    <dbReference type="NCBI Taxonomy" id="334390"/>
    <lineage>
        <taxon>Bacteria</taxon>
        <taxon>Bacillati</taxon>
        <taxon>Bacillota</taxon>
        <taxon>Bacilli</taxon>
        <taxon>Lactobacillales</taxon>
        <taxon>Lactobacillaceae</taxon>
        <taxon>Limosilactobacillus</taxon>
    </lineage>
</organism>
<comment type="function">
    <text evidence="1">Provides the (R)-glutamate required for cell wall biosynthesis.</text>
</comment>
<comment type="catalytic activity">
    <reaction evidence="1">
        <text>L-glutamate = D-glutamate</text>
        <dbReference type="Rhea" id="RHEA:12813"/>
        <dbReference type="ChEBI" id="CHEBI:29985"/>
        <dbReference type="ChEBI" id="CHEBI:29986"/>
        <dbReference type="EC" id="5.1.1.3"/>
    </reaction>
</comment>
<comment type="pathway">
    <text evidence="1">Cell wall biogenesis; peptidoglycan biosynthesis.</text>
</comment>
<comment type="similarity">
    <text evidence="1">Belongs to the aspartate/glutamate racemases family.</text>
</comment>
<name>MURI_LIMF3</name>
<keyword id="KW-0133">Cell shape</keyword>
<keyword id="KW-0961">Cell wall biogenesis/degradation</keyword>
<keyword id="KW-0413">Isomerase</keyword>
<keyword id="KW-0573">Peptidoglycan synthesis</keyword>
<keyword id="KW-1185">Reference proteome</keyword>
<dbReference type="EC" id="5.1.1.3" evidence="1"/>
<dbReference type="EMBL" id="AP008937">
    <property type="protein sequence ID" value="BAG26867.1"/>
    <property type="molecule type" value="Genomic_DNA"/>
</dbReference>
<dbReference type="RefSeq" id="WP_012390977.1">
    <property type="nucleotide sequence ID" value="NC_010610.1"/>
</dbReference>
<dbReference type="SMR" id="B2GB35"/>
<dbReference type="KEGG" id="lfe:LAF_0531"/>
<dbReference type="eggNOG" id="COG0796">
    <property type="taxonomic scope" value="Bacteria"/>
</dbReference>
<dbReference type="HOGENOM" id="CLU_052344_0_2_9"/>
<dbReference type="UniPathway" id="UPA00219"/>
<dbReference type="Proteomes" id="UP000001697">
    <property type="component" value="Chromosome"/>
</dbReference>
<dbReference type="GO" id="GO:0008881">
    <property type="term" value="F:glutamate racemase activity"/>
    <property type="evidence" value="ECO:0007669"/>
    <property type="project" value="UniProtKB-UniRule"/>
</dbReference>
<dbReference type="GO" id="GO:0071555">
    <property type="term" value="P:cell wall organization"/>
    <property type="evidence" value="ECO:0007669"/>
    <property type="project" value="UniProtKB-KW"/>
</dbReference>
<dbReference type="GO" id="GO:0009252">
    <property type="term" value="P:peptidoglycan biosynthetic process"/>
    <property type="evidence" value="ECO:0007669"/>
    <property type="project" value="UniProtKB-UniRule"/>
</dbReference>
<dbReference type="GO" id="GO:0008360">
    <property type="term" value="P:regulation of cell shape"/>
    <property type="evidence" value="ECO:0007669"/>
    <property type="project" value="UniProtKB-KW"/>
</dbReference>
<dbReference type="FunFam" id="3.40.50.1860:FF:000002">
    <property type="entry name" value="Glutamate racemase"/>
    <property type="match status" value="1"/>
</dbReference>
<dbReference type="Gene3D" id="3.40.50.1860">
    <property type="match status" value="2"/>
</dbReference>
<dbReference type="HAMAP" id="MF_00258">
    <property type="entry name" value="Glu_racemase"/>
    <property type="match status" value="1"/>
</dbReference>
<dbReference type="InterPro" id="IPR015942">
    <property type="entry name" value="Asp/Glu/hydantoin_racemase"/>
</dbReference>
<dbReference type="InterPro" id="IPR001920">
    <property type="entry name" value="Asp/Glu_race"/>
</dbReference>
<dbReference type="InterPro" id="IPR018187">
    <property type="entry name" value="Asp/Glu_racemase_AS_1"/>
</dbReference>
<dbReference type="InterPro" id="IPR033134">
    <property type="entry name" value="Asp/Glu_racemase_AS_2"/>
</dbReference>
<dbReference type="InterPro" id="IPR004391">
    <property type="entry name" value="Glu_race"/>
</dbReference>
<dbReference type="NCBIfam" id="TIGR00067">
    <property type="entry name" value="glut_race"/>
    <property type="match status" value="1"/>
</dbReference>
<dbReference type="PANTHER" id="PTHR21198">
    <property type="entry name" value="GLUTAMATE RACEMASE"/>
    <property type="match status" value="1"/>
</dbReference>
<dbReference type="PANTHER" id="PTHR21198:SF2">
    <property type="entry name" value="GLUTAMATE RACEMASE"/>
    <property type="match status" value="1"/>
</dbReference>
<dbReference type="Pfam" id="PF01177">
    <property type="entry name" value="Asp_Glu_race"/>
    <property type="match status" value="1"/>
</dbReference>
<dbReference type="SUPFAM" id="SSF53681">
    <property type="entry name" value="Aspartate/glutamate racemase"/>
    <property type="match status" value="2"/>
</dbReference>
<dbReference type="PROSITE" id="PS00923">
    <property type="entry name" value="ASP_GLU_RACEMASE_1"/>
    <property type="match status" value="1"/>
</dbReference>
<dbReference type="PROSITE" id="PS00924">
    <property type="entry name" value="ASP_GLU_RACEMASE_2"/>
    <property type="match status" value="1"/>
</dbReference>
<reference key="1">
    <citation type="journal article" date="2008" name="DNA Res.">
        <title>Comparative genome analysis of Lactobacillus reuteri and Lactobacillus fermentum reveal a genomic island for reuterin and cobalamin production.</title>
        <authorList>
            <person name="Morita H."/>
            <person name="Toh H."/>
            <person name="Fukuda S."/>
            <person name="Horikawa H."/>
            <person name="Oshima K."/>
            <person name="Suzuki T."/>
            <person name="Murakami M."/>
            <person name="Hisamatsu S."/>
            <person name="Kato Y."/>
            <person name="Takizawa T."/>
            <person name="Fukuoka H."/>
            <person name="Yoshimura T."/>
            <person name="Itoh K."/>
            <person name="O'Sullivan D.J."/>
            <person name="McKay L.L."/>
            <person name="Ohno H."/>
            <person name="Kikuchi J."/>
            <person name="Masaoka T."/>
            <person name="Hattori M."/>
        </authorList>
    </citation>
    <scope>NUCLEOTIDE SEQUENCE [LARGE SCALE GENOMIC DNA]</scope>
    <source>
        <strain>NBRC 3956 / LMG 18251</strain>
    </source>
</reference>
<accession>B2GB35</accession>
<gene>
    <name evidence="1" type="primary">murI</name>
    <name type="ordered locus">LAF_0531</name>
</gene>
<proteinExistence type="inferred from homology"/>
<sequence length="268" mass="28314">MDNRPIGVMDSGLGGLSVVRVIQQKLPNEEVIFVGDQGHFPYGTKDQAEVRQLALSIGAFLLKHDVKMMVVACNTATAAALPALQAALPIPVIGVIEPGARAALAQDKKGPIGVIATTATTTAGAYPATIERLAPGTPVIAKATQPMVEIVEHGQTGTAKAQEVVSEQLMTFKEHPVKTLIMGCTHFPFLAPEISKAVGPTVALVDPAKETVATAKSWLEQHQAMGNHAHPNYHLYSTGNLPDLRAGVNKWLLSGHFDLGTAQIEEGD</sequence>
<protein>
    <recommendedName>
        <fullName evidence="1">Glutamate racemase</fullName>
        <ecNumber evidence="1">5.1.1.3</ecNumber>
    </recommendedName>
</protein>
<evidence type="ECO:0000255" key="1">
    <source>
        <dbReference type="HAMAP-Rule" id="MF_00258"/>
    </source>
</evidence>
<feature type="chain" id="PRO_1000114052" description="Glutamate racemase">
    <location>
        <begin position="1"/>
        <end position="268"/>
    </location>
</feature>
<feature type="active site" description="Proton donor/acceptor" evidence="1">
    <location>
        <position position="73"/>
    </location>
</feature>
<feature type="active site" description="Proton donor/acceptor" evidence="1">
    <location>
        <position position="184"/>
    </location>
</feature>
<feature type="binding site" evidence="1">
    <location>
        <begin position="10"/>
        <end position="11"/>
    </location>
    <ligand>
        <name>substrate</name>
    </ligand>
</feature>
<feature type="binding site" evidence="1">
    <location>
        <begin position="42"/>
        <end position="43"/>
    </location>
    <ligand>
        <name>substrate</name>
    </ligand>
</feature>
<feature type="binding site" evidence="1">
    <location>
        <begin position="74"/>
        <end position="75"/>
    </location>
    <ligand>
        <name>substrate</name>
    </ligand>
</feature>
<feature type="binding site" evidence="1">
    <location>
        <begin position="185"/>
        <end position="186"/>
    </location>
    <ligand>
        <name>substrate</name>
    </ligand>
</feature>